<reference key="1">
    <citation type="journal article" date="1980" name="Proc. Natl. Acad. Sci. U.S.A.">
        <title>Nucleotide sequence of immunoglobulin heavy chain joining segments between translocated VH and mu constant regions genes.</title>
        <authorList>
            <person name="Bernard O."/>
            <person name="Gough N.M."/>
        </authorList>
    </citation>
    <scope>NUCLEOTIDE SEQUENCE</scope>
</reference>
<dbReference type="PIR" id="A02074">
    <property type="entry name" value="MHMS76"/>
</dbReference>
<dbReference type="SMR" id="P01804"/>
<dbReference type="FunCoup" id="P01804">
    <property type="interactions" value="514"/>
</dbReference>
<dbReference type="InParanoid" id="P01804"/>
<dbReference type="Proteomes" id="UP000000589">
    <property type="component" value="Unplaced"/>
</dbReference>
<dbReference type="RNAct" id="P01804">
    <property type="molecule type" value="protein"/>
</dbReference>
<dbReference type="GO" id="GO:0005576">
    <property type="term" value="C:extracellular region"/>
    <property type="evidence" value="ECO:0007669"/>
    <property type="project" value="UniProtKB-ARBA"/>
</dbReference>
<dbReference type="GO" id="GO:0019814">
    <property type="term" value="C:immunoglobulin complex"/>
    <property type="evidence" value="ECO:0007669"/>
    <property type="project" value="UniProtKB-KW"/>
</dbReference>
<dbReference type="GO" id="GO:0003823">
    <property type="term" value="F:antigen binding"/>
    <property type="evidence" value="ECO:0000318"/>
    <property type="project" value="GO_Central"/>
</dbReference>
<dbReference type="GO" id="GO:0016064">
    <property type="term" value="P:immunoglobulin mediated immune response"/>
    <property type="evidence" value="ECO:0000318"/>
    <property type="project" value="GO_Central"/>
</dbReference>
<dbReference type="CDD" id="cd04981">
    <property type="entry name" value="IgV_H"/>
    <property type="match status" value="1"/>
</dbReference>
<dbReference type="FunFam" id="2.60.40.10:FF:001372">
    <property type="entry name" value="Ig heavy chain V region M603"/>
    <property type="match status" value="1"/>
</dbReference>
<dbReference type="Gene3D" id="2.60.40.10">
    <property type="entry name" value="Immunoglobulins"/>
    <property type="match status" value="1"/>
</dbReference>
<dbReference type="InterPro" id="IPR007110">
    <property type="entry name" value="Ig-like_dom"/>
</dbReference>
<dbReference type="InterPro" id="IPR036179">
    <property type="entry name" value="Ig-like_dom_sf"/>
</dbReference>
<dbReference type="InterPro" id="IPR013783">
    <property type="entry name" value="Ig-like_fold"/>
</dbReference>
<dbReference type="InterPro" id="IPR003599">
    <property type="entry name" value="Ig_sub"/>
</dbReference>
<dbReference type="InterPro" id="IPR013106">
    <property type="entry name" value="Ig_V-set"/>
</dbReference>
<dbReference type="InterPro" id="IPR050199">
    <property type="entry name" value="IgHV"/>
</dbReference>
<dbReference type="PANTHER" id="PTHR23266">
    <property type="entry name" value="IMMUNOGLOBULIN HEAVY CHAIN"/>
    <property type="match status" value="1"/>
</dbReference>
<dbReference type="Pfam" id="PF07686">
    <property type="entry name" value="V-set"/>
    <property type="match status" value="1"/>
</dbReference>
<dbReference type="SMART" id="SM00409">
    <property type="entry name" value="IG"/>
    <property type="match status" value="1"/>
</dbReference>
<dbReference type="SMART" id="SM00406">
    <property type="entry name" value="IGv"/>
    <property type="match status" value="1"/>
</dbReference>
<dbReference type="SUPFAM" id="SSF48726">
    <property type="entry name" value="Immunoglobulin"/>
    <property type="match status" value="1"/>
</dbReference>
<dbReference type="PROSITE" id="PS50835">
    <property type="entry name" value="IG_LIKE"/>
    <property type="match status" value="1"/>
</dbReference>
<comment type="miscellaneous">
    <text>The sequence of the first 197 residues of the C region was also determined and differs in only 3 positions from the corresponding portion of the mouse MOPC 104e mu chain.</text>
</comment>
<accession>P01804</accession>
<feature type="chain" id="PRO_0000059889" description="Ig heavy chain V-III region HPC76">
    <location>
        <begin position="1" status="less than"/>
        <end position="111" status="greater than"/>
    </location>
</feature>
<feature type="domain" description="Ig-like">
    <location>
        <begin position="1" status="less than"/>
        <end position="110"/>
    </location>
</feature>
<feature type="non-terminal residue">
    <location>
        <position position="1"/>
    </location>
</feature>
<feature type="non-terminal residue">
    <location>
        <position position="111"/>
    </location>
</feature>
<name>HVM35_MOUSE</name>
<sequence>ESGGGLVQPGGSMKLSCVASGFTFSNYWMNWVRQSPEKGLEWVAEIRLKSGYATHYAESVKGRFTISRDDSKSSVYLQMNNLRAEDTGIYYCTRPGVPDYWGQGTTLTVSS</sequence>
<protein>
    <recommendedName>
        <fullName>Ig heavy chain V-III region HPC76</fullName>
    </recommendedName>
</protein>
<organism>
    <name type="scientific">Mus musculus</name>
    <name type="common">Mouse</name>
    <dbReference type="NCBI Taxonomy" id="10090"/>
    <lineage>
        <taxon>Eukaryota</taxon>
        <taxon>Metazoa</taxon>
        <taxon>Chordata</taxon>
        <taxon>Craniata</taxon>
        <taxon>Vertebrata</taxon>
        <taxon>Euteleostomi</taxon>
        <taxon>Mammalia</taxon>
        <taxon>Eutheria</taxon>
        <taxon>Euarchontoglires</taxon>
        <taxon>Glires</taxon>
        <taxon>Rodentia</taxon>
        <taxon>Myomorpha</taxon>
        <taxon>Muroidea</taxon>
        <taxon>Muridae</taxon>
        <taxon>Murinae</taxon>
        <taxon>Mus</taxon>
        <taxon>Mus</taxon>
    </lineage>
</organism>
<proteinExistence type="predicted"/>
<keyword id="KW-1064">Adaptive immunity</keyword>
<keyword id="KW-0391">Immunity</keyword>
<keyword id="KW-1280">Immunoglobulin</keyword>
<keyword id="KW-1185">Reference proteome</keyword>